<organism>
    <name type="scientific">Trichomonas vaginalis</name>
    <dbReference type="NCBI Taxonomy" id="5722"/>
    <lineage>
        <taxon>Eukaryota</taxon>
        <taxon>Metamonada</taxon>
        <taxon>Parabasalia</taxon>
        <taxon>Trichomonadida</taxon>
        <taxon>Trichomonadidae</taxon>
        <taxon>Trichomonas</taxon>
    </lineage>
</organism>
<gene>
    <name type="primary">VALS</name>
</gene>
<proteinExistence type="inferred from homology"/>
<sequence>DHAGIATQFRVEKKIYDEKKLHRGEYSREYFLEEAHKWVESKSGTILSQLRDMGSSLAWKDTYYTLDEKLSESVIAAFIKLFDEGLIYRSERLVNWDCALKTAISDAEVEYITLTKRTKLNVPNHKYPQYPFGVMAHFYYEICDKDGKKTGEKVEIATTRLETMLGDTAVAINPKDARYNHLHGMYVWHPIREVPIPIIQDEILVDMNFGTGVVKVTPGHDPNDYEVYKRHPEIGLISILTPDGAIAPGYGQFSGMMRFDARVEMVKWMKEHGLYKEEKDHEMRLGITQRGHDIVEQVITPQWFVNTTDMAARAIKAVDDGELKIVPDEFVVDWKKWHENIRPWCISRQLMWGLRIPAYRVQIDGKWAEGNGEWVAAASQEEAIAKGAKANNVVPSRVTVEQDPDVLDTWFSSALLPFSGVGWPSNEERLNRYFPNSILETGWDILTFWVSRMVMMSLTLTNKVPFHTILLHPLVRDAQGRKMSKSFGN</sequence>
<name>SYV_TRIVA</name>
<keyword id="KW-0030">Aminoacyl-tRNA synthetase</keyword>
<keyword id="KW-0067">ATP-binding</keyword>
<keyword id="KW-0436">Ligase</keyword>
<keyword id="KW-0547">Nucleotide-binding</keyword>
<keyword id="KW-0648">Protein biosynthesis</keyword>
<accession>P46216</accession>
<comment type="catalytic activity">
    <reaction>
        <text>tRNA(Val) + L-valine + ATP = L-valyl-tRNA(Val) + AMP + diphosphate</text>
        <dbReference type="Rhea" id="RHEA:10704"/>
        <dbReference type="Rhea" id="RHEA-COMP:9672"/>
        <dbReference type="Rhea" id="RHEA-COMP:9708"/>
        <dbReference type="ChEBI" id="CHEBI:30616"/>
        <dbReference type="ChEBI" id="CHEBI:33019"/>
        <dbReference type="ChEBI" id="CHEBI:57762"/>
        <dbReference type="ChEBI" id="CHEBI:78442"/>
        <dbReference type="ChEBI" id="CHEBI:78537"/>
        <dbReference type="ChEBI" id="CHEBI:456215"/>
        <dbReference type="EC" id="6.1.1.9"/>
    </reaction>
</comment>
<comment type="similarity">
    <text evidence="2">Belongs to the class-I aminoacyl-tRNA synthetase family.</text>
</comment>
<reference key="1">
    <citation type="journal article" date="1995" name="Proc. Natl. Acad. Sci. U.S.A.">
        <title>Root of the universal tree of life based on ancient aminoacyl-tRNA synthetase gene duplications.</title>
        <authorList>
            <person name="Brown J.R."/>
            <person name="Doolittle W.F."/>
        </authorList>
    </citation>
    <scope>NUCLEOTIDE SEQUENCE [GENOMIC DNA]</scope>
    <source>
        <strain>ATCC 30001 / NIH-C1</strain>
    </source>
</reference>
<protein>
    <recommendedName>
        <fullName>Valine--tRNA ligase</fullName>
        <ecNumber>6.1.1.9</ecNumber>
    </recommendedName>
    <alternativeName>
        <fullName>Valyl-tRNA synthetase</fullName>
        <shortName>ValRS</shortName>
    </alternativeName>
</protein>
<feature type="chain" id="PRO_0000106257" description="Valine--tRNA ligase">
    <location>
        <begin position="1" status="less than"/>
        <end position="489" status="greater than"/>
    </location>
</feature>
<feature type="short sequence motif" description="'KMSKS' region">
    <location>
        <begin position="482"/>
        <end position="486"/>
    </location>
</feature>
<feature type="binding site" evidence="1">
    <location>
        <position position="485"/>
    </location>
    <ligand>
        <name>ATP</name>
        <dbReference type="ChEBI" id="CHEBI:30616"/>
    </ligand>
</feature>
<feature type="non-terminal residue">
    <location>
        <position position="1"/>
    </location>
</feature>
<feature type="non-terminal residue">
    <location>
        <position position="489"/>
    </location>
</feature>
<evidence type="ECO:0000250" key="1"/>
<evidence type="ECO:0000305" key="2"/>
<dbReference type="EC" id="6.1.1.9"/>
<dbReference type="EMBL" id="L37098">
    <property type="protein sequence ID" value="AAC41565.1"/>
    <property type="molecule type" value="Genomic_DNA"/>
</dbReference>
<dbReference type="SMR" id="P46216"/>
<dbReference type="VEuPathDB" id="TrichDB:TVAGG3_0540980"/>
<dbReference type="eggNOG" id="KOG0432">
    <property type="taxonomic scope" value="Eukaryota"/>
</dbReference>
<dbReference type="GO" id="GO:0005829">
    <property type="term" value="C:cytosol"/>
    <property type="evidence" value="ECO:0007669"/>
    <property type="project" value="TreeGrafter"/>
</dbReference>
<dbReference type="GO" id="GO:0002161">
    <property type="term" value="F:aminoacyl-tRNA deacylase activity"/>
    <property type="evidence" value="ECO:0007669"/>
    <property type="project" value="InterPro"/>
</dbReference>
<dbReference type="GO" id="GO:0005524">
    <property type="term" value="F:ATP binding"/>
    <property type="evidence" value="ECO:0007669"/>
    <property type="project" value="UniProtKB-KW"/>
</dbReference>
<dbReference type="GO" id="GO:0004832">
    <property type="term" value="F:valine-tRNA ligase activity"/>
    <property type="evidence" value="ECO:0007669"/>
    <property type="project" value="UniProtKB-EC"/>
</dbReference>
<dbReference type="GO" id="GO:0006438">
    <property type="term" value="P:valyl-tRNA aminoacylation"/>
    <property type="evidence" value="ECO:0007669"/>
    <property type="project" value="InterPro"/>
</dbReference>
<dbReference type="FunFam" id="3.90.740.10:FF:000005">
    <property type="entry name" value="Valine--tRNA ligase, mitochondrial"/>
    <property type="match status" value="1"/>
</dbReference>
<dbReference type="FunFam" id="3.40.50.620:FF:000496">
    <property type="entry name" value="Valyl tRNA Synthetase, putative"/>
    <property type="match status" value="1"/>
</dbReference>
<dbReference type="Gene3D" id="3.40.50.620">
    <property type="entry name" value="HUPs"/>
    <property type="match status" value="2"/>
</dbReference>
<dbReference type="InterPro" id="IPR002300">
    <property type="entry name" value="aa-tRNA-synth_Ia"/>
</dbReference>
<dbReference type="InterPro" id="IPR014729">
    <property type="entry name" value="Rossmann-like_a/b/a_fold"/>
</dbReference>
<dbReference type="InterPro" id="IPR009008">
    <property type="entry name" value="Val/Leu/Ile-tRNA-synth_edit"/>
</dbReference>
<dbReference type="InterPro" id="IPR002303">
    <property type="entry name" value="Valyl-tRNA_ligase"/>
</dbReference>
<dbReference type="PANTHER" id="PTHR11946:SF109">
    <property type="entry name" value="VALINE--TRNA LIGASE"/>
    <property type="match status" value="1"/>
</dbReference>
<dbReference type="PANTHER" id="PTHR11946">
    <property type="entry name" value="VALYL-TRNA SYNTHETASES"/>
    <property type="match status" value="1"/>
</dbReference>
<dbReference type="Pfam" id="PF00133">
    <property type="entry name" value="tRNA-synt_1"/>
    <property type="match status" value="1"/>
</dbReference>
<dbReference type="PRINTS" id="PR00986">
    <property type="entry name" value="TRNASYNTHVAL"/>
</dbReference>
<dbReference type="SUPFAM" id="SSF52374">
    <property type="entry name" value="Nucleotidylyl transferase"/>
    <property type="match status" value="1"/>
</dbReference>
<dbReference type="SUPFAM" id="SSF50677">
    <property type="entry name" value="ValRS/IleRS/LeuRS editing domain"/>
    <property type="match status" value="1"/>
</dbReference>